<name>SIR5_MONDO</name>
<sequence>MSLLHFATRRLILQVLRELGLKAPPVHKTLKICIAMSRPSSNMADFRRFFARAKHIAIITGAGVSAESGVPTFRGPGGFWRKWKAEDLATPEAFAQNPSLVWEFYHYRREVILKKHPNAAHVAIAACEERLSLQGRRVVVITQNIDEFHTKAGTKNILELHGSLFKTRCCSCGNVRVNYNNPICPALEGKGLPDPNAPDAQIPLENLPRWKTTGDFSVLFLLDASPLYPSNLSCSHPVGAPALSEVADLGRWVGTSSLVYPAGMFGPHVALRGIPVAEFNTVTTPVTQNFRFHFSGLCGTTIPEALSPHESEKTG</sequence>
<reference key="1">
    <citation type="journal article" date="2007" name="Nature">
        <title>Genome of the marsupial Monodelphis domestica reveals innovation in non-coding sequences.</title>
        <authorList>
            <person name="Mikkelsen T.S."/>
            <person name="Wakefield M.J."/>
            <person name="Aken B."/>
            <person name="Amemiya C.T."/>
            <person name="Chang J.L."/>
            <person name="Duke S."/>
            <person name="Garber M."/>
            <person name="Gentles A.J."/>
            <person name="Goodstadt L."/>
            <person name="Heger A."/>
            <person name="Jurka J."/>
            <person name="Kamal M."/>
            <person name="Mauceli E."/>
            <person name="Searle S.M."/>
            <person name="Sharpe T."/>
            <person name="Baker M.L."/>
            <person name="Batzer M.A."/>
            <person name="Benos P.V."/>
            <person name="Belov K."/>
            <person name="Clamp M."/>
            <person name="Cook A."/>
            <person name="Cuff J."/>
            <person name="Das R."/>
            <person name="Davidow L."/>
            <person name="Deakin J.E."/>
            <person name="Fazzari M.J."/>
            <person name="Glass J.L."/>
            <person name="Grabherr M."/>
            <person name="Greally J.M."/>
            <person name="Gu W."/>
            <person name="Hore T.A."/>
            <person name="Huttley G.A."/>
            <person name="Kleber M."/>
            <person name="Jirtle R.L."/>
            <person name="Koina E."/>
            <person name="Lee J.T."/>
            <person name="Mahony S."/>
            <person name="Marra M.A."/>
            <person name="Miller R.D."/>
            <person name="Nicholls R.D."/>
            <person name="Oda M."/>
            <person name="Papenfuss A.T."/>
            <person name="Parra Z.E."/>
            <person name="Pollock D.D."/>
            <person name="Ray D.A."/>
            <person name="Schein J.E."/>
            <person name="Speed T.P."/>
            <person name="Thompson K."/>
            <person name="VandeBerg J.L."/>
            <person name="Wade C.M."/>
            <person name="Walker J.A."/>
            <person name="Waters P.D."/>
            <person name="Webber C."/>
            <person name="Weidman J.R."/>
            <person name="Xie X."/>
            <person name="Zody M.C."/>
            <person name="Baldwin J."/>
            <person name="Abdouelleil A."/>
            <person name="Abdulkadir J."/>
            <person name="Abebe A."/>
            <person name="Abera B."/>
            <person name="Abreu J."/>
            <person name="Acer S.C."/>
            <person name="Aftuck L."/>
            <person name="Alexander A."/>
            <person name="An P."/>
            <person name="Anderson E."/>
            <person name="Anderson S."/>
            <person name="Arachi H."/>
            <person name="Azer M."/>
            <person name="Bachantsang P."/>
            <person name="Barry A."/>
            <person name="Bayul T."/>
            <person name="Berlin A."/>
            <person name="Bessette D."/>
            <person name="Bloom T."/>
            <person name="Bloom T."/>
            <person name="Boguslavskiy L."/>
            <person name="Bonnet C."/>
            <person name="Boukhgalter B."/>
            <person name="Bourzgui I."/>
            <person name="Brown A."/>
            <person name="Cahill P."/>
            <person name="Channer S."/>
            <person name="Cheshatsang Y."/>
            <person name="Chuda L."/>
            <person name="Citroen M."/>
            <person name="Collymore A."/>
            <person name="Cooke P."/>
            <person name="Costello M."/>
            <person name="D'Aco K."/>
            <person name="Daza R."/>
            <person name="De Haan G."/>
            <person name="DeGray S."/>
            <person name="DeMaso C."/>
            <person name="Dhargay N."/>
            <person name="Dooley K."/>
            <person name="Dooley E."/>
            <person name="Doricent M."/>
            <person name="Dorje P."/>
            <person name="Dorjee K."/>
            <person name="Dupes A."/>
            <person name="Elong R."/>
            <person name="Falk J."/>
            <person name="Farina A."/>
            <person name="Faro S."/>
            <person name="Ferguson D."/>
            <person name="Fisher S."/>
            <person name="Foley C.D."/>
            <person name="Franke A."/>
            <person name="Friedrich D."/>
            <person name="Gadbois L."/>
            <person name="Gearin G."/>
            <person name="Gearin C.R."/>
            <person name="Giannoukos G."/>
            <person name="Goode T."/>
            <person name="Graham J."/>
            <person name="Grandbois E."/>
            <person name="Grewal S."/>
            <person name="Gyaltsen K."/>
            <person name="Hafez N."/>
            <person name="Hagos B."/>
            <person name="Hall J."/>
            <person name="Henson C."/>
            <person name="Hollinger A."/>
            <person name="Honan T."/>
            <person name="Huard M.D."/>
            <person name="Hughes L."/>
            <person name="Hurhula B."/>
            <person name="Husby M.E."/>
            <person name="Kamat A."/>
            <person name="Kanga B."/>
            <person name="Kashin S."/>
            <person name="Khazanovich D."/>
            <person name="Kisner P."/>
            <person name="Lance K."/>
            <person name="Lara M."/>
            <person name="Lee W."/>
            <person name="Lennon N."/>
            <person name="Letendre F."/>
            <person name="LeVine R."/>
            <person name="Lipovsky A."/>
            <person name="Liu X."/>
            <person name="Liu J."/>
            <person name="Liu S."/>
            <person name="Lokyitsang T."/>
            <person name="Lokyitsang Y."/>
            <person name="Lubonja R."/>
            <person name="Lui A."/>
            <person name="MacDonald P."/>
            <person name="Magnisalis V."/>
            <person name="Maru K."/>
            <person name="Matthews C."/>
            <person name="McCusker W."/>
            <person name="McDonough S."/>
            <person name="Mehta T."/>
            <person name="Meldrim J."/>
            <person name="Meneus L."/>
            <person name="Mihai O."/>
            <person name="Mihalev A."/>
            <person name="Mihova T."/>
            <person name="Mittelman R."/>
            <person name="Mlenga V."/>
            <person name="Montmayeur A."/>
            <person name="Mulrain L."/>
            <person name="Navidi A."/>
            <person name="Naylor J."/>
            <person name="Negash T."/>
            <person name="Nguyen T."/>
            <person name="Nguyen N."/>
            <person name="Nicol R."/>
            <person name="Norbu C."/>
            <person name="Norbu N."/>
            <person name="Novod N."/>
            <person name="O'Neill B."/>
            <person name="Osman S."/>
            <person name="Markiewicz E."/>
            <person name="Oyono O.L."/>
            <person name="Patti C."/>
            <person name="Phunkhang P."/>
            <person name="Pierre F."/>
            <person name="Priest M."/>
            <person name="Raghuraman S."/>
            <person name="Rege F."/>
            <person name="Reyes R."/>
            <person name="Rise C."/>
            <person name="Rogov P."/>
            <person name="Ross K."/>
            <person name="Ryan E."/>
            <person name="Settipalli S."/>
            <person name="Shea T."/>
            <person name="Sherpa N."/>
            <person name="Shi L."/>
            <person name="Shih D."/>
            <person name="Sparrow T."/>
            <person name="Spaulding J."/>
            <person name="Stalker J."/>
            <person name="Stange-Thomann N."/>
            <person name="Stavropoulos S."/>
            <person name="Stone C."/>
            <person name="Strader C."/>
            <person name="Tesfaye S."/>
            <person name="Thomson T."/>
            <person name="Thoulutsang Y."/>
            <person name="Thoulutsang D."/>
            <person name="Topham K."/>
            <person name="Topping I."/>
            <person name="Tsamla T."/>
            <person name="Vassiliev H."/>
            <person name="Vo A."/>
            <person name="Wangchuk T."/>
            <person name="Wangdi T."/>
            <person name="Weiand M."/>
            <person name="Wilkinson J."/>
            <person name="Wilson A."/>
            <person name="Yadav S."/>
            <person name="Young G."/>
            <person name="Yu Q."/>
            <person name="Zembek L."/>
            <person name="Zhong D."/>
            <person name="Zimmer A."/>
            <person name="Zwirko Z."/>
            <person name="Jaffe D.B."/>
            <person name="Alvarez P."/>
            <person name="Brockman W."/>
            <person name="Butler J."/>
            <person name="Chin C."/>
            <person name="Gnerre S."/>
            <person name="MacCallum I."/>
            <person name="Graves J.A."/>
            <person name="Ponting C.P."/>
            <person name="Breen M."/>
            <person name="Samollow P.B."/>
            <person name="Lander E.S."/>
            <person name="Lindblad-Toh K."/>
        </authorList>
    </citation>
    <scope>NUCLEOTIDE SEQUENCE [LARGE SCALE GENOMIC DNA]</scope>
</reference>
<dbReference type="EC" id="2.3.1.-" evidence="1"/>
<dbReference type="SMR" id="F7D4X9"/>
<dbReference type="FunCoup" id="F7D4X9">
    <property type="interactions" value="771"/>
</dbReference>
<dbReference type="STRING" id="13616.ENSMODP00000013320"/>
<dbReference type="Ensembl" id="ENSMODT00000013565.4">
    <property type="protein sequence ID" value="ENSMODP00000013320.2"/>
    <property type="gene ID" value="ENSMODG00000010636.4"/>
</dbReference>
<dbReference type="eggNOG" id="KOG2684">
    <property type="taxonomic scope" value="Eukaryota"/>
</dbReference>
<dbReference type="GeneTree" id="ENSGT00940000156080"/>
<dbReference type="HOGENOM" id="CLU_023643_3_1_1"/>
<dbReference type="InParanoid" id="F7D4X9"/>
<dbReference type="OMA" id="LIHMHGE"/>
<dbReference type="TreeFam" id="TF106183"/>
<dbReference type="Proteomes" id="UP000002280">
    <property type="component" value="Chromosome 3"/>
</dbReference>
<dbReference type="Bgee" id="ENSMODG00000010636">
    <property type="expression patterns" value="Expressed in spermatocyte and 19 other cell types or tissues"/>
</dbReference>
<dbReference type="GO" id="GO:0005829">
    <property type="term" value="C:cytosol"/>
    <property type="evidence" value="ECO:0000250"/>
    <property type="project" value="UniProtKB"/>
</dbReference>
<dbReference type="GO" id="GO:0005743">
    <property type="term" value="C:mitochondrial inner membrane"/>
    <property type="evidence" value="ECO:0007669"/>
    <property type="project" value="Ensembl"/>
</dbReference>
<dbReference type="GO" id="GO:0005758">
    <property type="term" value="C:mitochondrial intermembrane space"/>
    <property type="evidence" value="ECO:0007669"/>
    <property type="project" value="Ensembl"/>
</dbReference>
<dbReference type="GO" id="GO:0005759">
    <property type="term" value="C:mitochondrial matrix"/>
    <property type="evidence" value="ECO:0000318"/>
    <property type="project" value="GO_Central"/>
</dbReference>
<dbReference type="GO" id="GO:0005739">
    <property type="term" value="C:mitochondrion"/>
    <property type="evidence" value="ECO:0000250"/>
    <property type="project" value="UniProtKB"/>
</dbReference>
<dbReference type="GO" id="GO:0005634">
    <property type="term" value="C:nucleus"/>
    <property type="evidence" value="ECO:0000318"/>
    <property type="project" value="GO_Central"/>
</dbReference>
<dbReference type="GO" id="GO:0017136">
    <property type="term" value="F:histone deacetylase activity, NAD-dependent"/>
    <property type="evidence" value="ECO:0000318"/>
    <property type="project" value="GO_Central"/>
</dbReference>
<dbReference type="GO" id="GO:0070403">
    <property type="term" value="F:NAD+ binding"/>
    <property type="evidence" value="ECO:0000318"/>
    <property type="project" value="GO_Central"/>
</dbReference>
<dbReference type="GO" id="GO:0061697">
    <property type="term" value="F:protein-glutaryllysine deglutarylase activity"/>
    <property type="evidence" value="ECO:0000318"/>
    <property type="project" value="GO_Central"/>
</dbReference>
<dbReference type="GO" id="GO:0036054">
    <property type="term" value="F:protein-malonyllysine demalonylase activity"/>
    <property type="evidence" value="ECO:0000250"/>
    <property type="project" value="UniProtKB"/>
</dbReference>
<dbReference type="GO" id="GO:0036055">
    <property type="term" value="F:protein-succinyllysine desuccinylase activity"/>
    <property type="evidence" value="ECO:0000250"/>
    <property type="project" value="UniProtKB"/>
</dbReference>
<dbReference type="GO" id="GO:0008270">
    <property type="term" value="F:zinc ion binding"/>
    <property type="evidence" value="ECO:0007669"/>
    <property type="project" value="Ensembl"/>
</dbReference>
<dbReference type="GO" id="GO:2000378">
    <property type="term" value="P:negative regulation of reactive oxygen species metabolic process"/>
    <property type="evidence" value="ECO:0007669"/>
    <property type="project" value="Ensembl"/>
</dbReference>
<dbReference type="GO" id="GO:0036046">
    <property type="term" value="P:protein demalonylation"/>
    <property type="evidence" value="ECO:0000250"/>
    <property type="project" value="UniProtKB"/>
</dbReference>
<dbReference type="GO" id="GO:0036048">
    <property type="term" value="P:protein desuccinylation"/>
    <property type="evidence" value="ECO:0000250"/>
    <property type="project" value="UniProtKB"/>
</dbReference>
<dbReference type="GO" id="GO:0010566">
    <property type="term" value="P:regulation of ketone biosynthetic process"/>
    <property type="evidence" value="ECO:0000250"/>
    <property type="project" value="UniProtKB"/>
</dbReference>
<dbReference type="GO" id="GO:0002931">
    <property type="term" value="P:response to ischemia"/>
    <property type="evidence" value="ECO:0007669"/>
    <property type="project" value="Ensembl"/>
</dbReference>
<dbReference type="Gene3D" id="3.30.1600.10">
    <property type="entry name" value="SIR2/SIRT2 'Small Domain"/>
    <property type="match status" value="1"/>
</dbReference>
<dbReference type="Gene3D" id="3.40.50.1220">
    <property type="entry name" value="TPP-binding domain"/>
    <property type="match status" value="1"/>
</dbReference>
<dbReference type="HAMAP" id="MF_01121">
    <property type="entry name" value="Sirtuin_ClassIII"/>
    <property type="match status" value="1"/>
</dbReference>
<dbReference type="InterPro" id="IPR029035">
    <property type="entry name" value="DHS-like_NAD/FAD-binding_dom"/>
</dbReference>
<dbReference type="InterPro" id="IPR050134">
    <property type="entry name" value="NAD-dep_sirtuin_deacylases"/>
</dbReference>
<dbReference type="InterPro" id="IPR003000">
    <property type="entry name" value="Sirtuin"/>
</dbReference>
<dbReference type="InterPro" id="IPR026591">
    <property type="entry name" value="Sirtuin_cat_small_dom_sf"/>
</dbReference>
<dbReference type="InterPro" id="IPR027546">
    <property type="entry name" value="Sirtuin_class_III"/>
</dbReference>
<dbReference type="InterPro" id="IPR026590">
    <property type="entry name" value="Ssirtuin_cat_dom"/>
</dbReference>
<dbReference type="PANTHER" id="PTHR11085">
    <property type="entry name" value="NAD-DEPENDENT PROTEIN DEACYLASE SIRTUIN-5, MITOCHONDRIAL-RELATED"/>
    <property type="match status" value="1"/>
</dbReference>
<dbReference type="PANTHER" id="PTHR11085:SF10">
    <property type="entry name" value="NAD-DEPENDENT PROTEIN DEACYLASE SIRTUIN-5, MITOCHONDRIAL-RELATED"/>
    <property type="match status" value="1"/>
</dbReference>
<dbReference type="Pfam" id="PF02146">
    <property type="entry name" value="SIR2"/>
    <property type="match status" value="1"/>
</dbReference>
<dbReference type="SUPFAM" id="SSF52467">
    <property type="entry name" value="DHS-like NAD/FAD-binding domain"/>
    <property type="match status" value="1"/>
</dbReference>
<dbReference type="PROSITE" id="PS50305">
    <property type="entry name" value="SIRTUIN"/>
    <property type="match status" value="1"/>
</dbReference>
<organism>
    <name type="scientific">Monodelphis domestica</name>
    <name type="common">Gray short-tailed opossum</name>
    <dbReference type="NCBI Taxonomy" id="13616"/>
    <lineage>
        <taxon>Eukaryota</taxon>
        <taxon>Metazoa</taxon>
        <taxon>Chordata</taxon>
        <taxon>Craniata</taxon>
        <taxon>Vertebrata</taxon>
        <taxon>Euteleostomi</taxon>
        <taxon>Mammalia</taxon>
        <taxon>Metatheria</taxon>
        <taxon>Didelphimorphia</taxon>
        <taxon>Didelphidae</taxon>
        <taxon>Monodelphis</taxon>
    </lineage>
</organism>
<evidence type="ECO:0000255" key="1">
    <source>
        <dbReference type="HAMAP-Rule" id="MF_03160"/>
    </source>
</evidence>
<evidence type="ECO:0000255" key="2">
    <source>
        <dbReference type="PROSITE-ProRule" id="PRU00236"/>
    </source>
</evidence>
<keyword id="KW-0963">Cytoplasm</keyword>
<keyword id="KW-0496">Mitochondrion</keyword>
<keyword id="KW-0520">NAD</keyword>
<keyword id="KW-0539">Nucleus</keyword>
<keyword id="KW-1185">Reference proteome</keyword>
<keyword id="KW-0808">Transferase</keyword>
<keyword id="KW-0809">Transit peptide</keyword>
<gene>
    <name evidence="1" type="primary">SIRT5</name>
</gene>
<feature type="transit peptide" description="Mitochondrion" evidence="1">
    <location>
        <begin position="1"/>
        <end position="39"/>
    </location>
</feature>
<feature type="chain" id="PRO_0000417338" description="NAD-dependent protein deacylase sirtuin-5, mitochondrial">
    <location>
        <begin position="40"/>
        <end position="315"/>
    </location>
</feature>
<feature type="domain" description="Deacetylase sirtuin-type" evidence="2">
    <location>
        <begin position="40"/>
        <end position="312"/>
    </location>
</feature>
<feature type="active site" description="Proton acceptor" evidence="1">
    <location>
        <position position="161"/>
    </location>
</feature>
<feature type="binding site" evidence="1">
    <location>
        <begin position="61"/>
        <end position="80"/>
    </location>
    <ligand>
        <name>NAD(+)</name>
        <dbReference type="ChEBI" id="CHEBI:57540"/>
    </ligand>
</feature>
<feature type="binding site" evidence="1">
    <location>
        <position position="105"/>
    </location>
    <ligand>
        <name>substrate</name>
    </ligand>
</feature>
<feature type="binding site" evidence="1">
    <location>
        <position position="108"/>
    </location>
    <ligand>
        <name>substrate</name>
    </ligand>
</feature>
<feature type="binding site" evidence="1">
    <location>
        <begin position="143"/>
        <end position="146"/>
    </location>
    <ligand>
        <name>NAD(+)</name>
        <dbReference type="ChEBI" id="CHEBI:57540"/>
    </ligand>
</feature>
<feature type="binding site" evidence="1">
    <location>
        <begin position="254"/>
        <end position="256"/>
    </location>
    <ligand>
        <name>NAD(+)</name>
        <dbReference type="ChEBI" id="CHEBI:57540"/>
    </ligand>
</feature>
<feature type="binding site" evidence="1">
    <location>
        <begin position="280"/>
        <end position="282"/>
    </location>
    <ligand>
        <name>NAD(+)</name>
        <dbReference type="ChEBI" id="CHEBI:57540"/>
    </ligand>
</feature>
<feature type="binding site" evidence="1">
    <location>
        <position position="298"/>
    </location>
    <ligand>
        <name>NAD(+)</name>
        <dbReference type="ChEBI" id="CHEBI:57540"/>
    </ligand>
</feature>
<accession>F7D4X9</accession>
<proteinExistence type="inferred from homology"/>
<comment type="function">
    <text evidence="1">NAD-dependent lysine demalonylase, desuccinylase and deglutarylase that specifically removes malonyl, succinyl and glutaryl groups on target proteins. Activates CPS1 and contributes to the regulation of blood ammonia levels during prolonged fasting: acts by mediating desuccinylation and deglutarylation of CPS1, thereby increasing CPS1 activity in response to elevated NAD levels during fasting. Activates SOD1 by mediating its desuccinylation, leading to reduced reactive oxygen species. Activates SHMT2 by mediating its desuccinylation. Modulates ketogenesis through the desuccinylation and activation of HMGCS2. Has weak NAD-dependent protein deacetylase activity; however this activity may not be physiologically relevant in vivo. Can deacetylate cytochrome c (CYCS) and a number of other proteins in vitro such as UOX.</text>
</comment>
<comment type="catalytic activity">
    <reaction evidence="1">
        <text>N(6)-malonyl-L-lysyl-[protein] + NAD(+) + H2O = 2''-O-malonyl-ADP-D-ribose + nicotinamide + L-lysyl-[protein]</text>
        <dbReference type="Rhea" id="RHEA:47672"/>
        <dbReference type="Rhea" id="RHEA-COMP:9752"/>
        <dbReference type="Rhea" id="RHEA-COMP:11878"/>
        <dbReference type="ChEBI" id="CHEBI:15377"/>
        <dbReference type="ChEBI" id="CHEBI:17154"/>
        <dbReference type="ChEBI" id="CHEBI:29969"/>
        <dbReference type="ChEBI" id="CHEBI:57540"/>
        <dbReference type="ChEBI" id="CHEBI:87831"/>
        <dbReference type="ChEBI" id="CHEBI:87833"/>
    </reaction>
</comment>
<comment type="catalytic activity">
    <reaction evidence="1">
        <text>N(6)-succinyl-L-lysyl-[protein] + NAD(+) + H2O = 2''-O-succinyl-ADP-D-ribose + nicotinamide + L-lysyl-[protein]</text>
        <dbReference type="Rhea" id="RHEA:47668"/>
        <dbReference type="Rhea" id="RHEA-COMP:9752"/>
        <dbReference type="Rhea" id="RHEA-COMP:11877"/>
        <dbReference type="ChEBI" id="CHEBI:15377"/>
        <dbReference type="ChEBI" id="CHEBI:17154"/>
        <dbReference type="ChEBI" id="CHEBI:29969"/>
        <dbReference type="ChEBI" id="CHEBI:57540"/>
        <dbReference type="ChEBI" id="CHEBI:87830"/>
        <dbReference type="ChEBI" id="CHEBI:87832"/>
    </reaction>
</comment>
<comment type="catalytic activity">
    <reaction evidence="1">
        <text>N(6)-glutaryl-L-lysyl-[protein] + NAD(+) + H2O = 2''-O-glutaryl-ADP-D-ribose + nicotinamide + L-lysyl-[protein]</text>
        <dbReference type="Rhea" id="RHEA:47664"/>
        <dbReference type="Rhea" id="RHEA-COMP:9752"/>
        <dbReference type="Rhea" id="RHEA-COMP:11875"/>
        <dbReference type="ChEBI" id="CHEBI:15377"/>
        <dbReference type="ChEBI" id="CHEBI:17154"/>
        <dbReference type="ChEBI" id="CHEBI:29969"/>
        <dbReference type="ChEBI" id="CHEBI:57540"/>
        <dbReference type="ChEBI" id="CHEBI:87828"/>
        <dbReference type="ChEBI" id="CHEBI:87829"/>
    </reaction>
</comment>
<comment type="subunit">
    <text evidence="1">Monomer. Homodimer. Interacts with CPS1.</text>
</comment>
<comment type="subcellular location">
    <subcellularLocation>
        <location evidence="1">Mitochondrion</location>
    </subcellularLocation>
    <subcellularLocation>
        <location evidence="1">Cytoplasm</location>
        <location evidence="1">Cytosol</location>
    </subcellularLocation>
    <subcellularLocation>
        <location evidence="1">Nucleus</location>
    </subcellularLocation>
    <text evidence="1">Mainly mitochondrial. Also present extramitochondrially, with a fraction present in the cytosol and very small amounts also detected in the nucleus.</text>
</comment>
<comment type="domain">
    <text evidence="1">In contrast to class I sirtuins, class III sirtuins have only weak deacetylase activity. Difference in substrate specificity is probably due to a larger hydrophobic pocket with 2 residues (Tyr-105 and Arg-108) that bind to malonylated and succinylated substrates and define the specificity.</text>
</comment>
<comment type="similarity">
    <text evidence="1">Belongs to the sirtuin family. Class III subfamily.</text>
</comment>
<protein>
    <recommendedName>
        <fullName evidence="1">NAD-dependent protein deacylase sirtuin-5, mitochondrial</fullName>
        <ecNumber evidence="1">2.3.1.-</ecNumber>
    </recommendedName>
    <alternativeName>
        <fullName evidence="1">Regulatory protein SIR2 homolog 5</fullName>
    </alternativeName>
    <alternativeName>
        <fullName evidence="1">SIR2-like protein 5</fullName>
    </alternativeName>
</protein>